<keyword id="KW-0067">ATP-binding</keyword>
<keyword id="KW-0130">Cell adhesion</keyword>
<keyword id="KW-1003">Cell membrane</keyword>
<keyword id="KW-1015">Disulfide bond</keyword>
<keyword id="KW-0325">Glycoprotein</keyword>
<keyword id="KW-0393">Immunoglobulin domain</keyword>
<keyword id="KW-0418">Kinase</keyword>
<keyword id="KW-0472">Membrane</keyword>
<keyword id="KW-0547">Nucleotide-binding</keyword>
<keyword id="KW-0597">Phosphoprotein</keyword>
<keyword id="KW-0675">Receptor</keyword>
<keyword id="KW-1185">Reference proteome</keyword>
<keyword id="KW-0677">Repeat</keyword>
<keyword id="KW-0732">Signal</keyword>
<keyword id="KW-0808">Transferase</keyword>
<keyword id="KW-0812">Transmembrane</keyword>
<keyword id="KW-1133">Transmembrane helix</keyword>
<keyword id="KW-0829">Tyrosine-protein kinase</keyword>
<accession>Q9YI66</accession>
<dbReference type="EC" id="2.7.10.1"/>
<dbReference type="EMBL" id="AF021344">
    <property type="protein sequence ID" value="AAD01694.1"/>
    <property type="molecule type" value="mRNA"/>
</dbReference>
<dbReference type="SMR" id="Q9YI66"/>
<dbReference type="FunCoup" id="Q9YI66">
    <property type="interactions" value="1578"/>
</dbReference>
<dbReference type="STRING" id="7955.ENSDARP00000116623"/>
<dbReference type="GlyCosmos" id="Q9YI66">
    <property type="glycosylation" value="6 sites, No reported glycans"/>
</dbReference>
<dbReference type="PaxDb" id="7955-ENSDARP00000116623"/>
<dbReference type="AGR" id="ZFIN:ZDB-GENE-990714-13"/>
<dbReference type="ZFIN" id="ZDB-GENE-990714-13">
    <property type="gene designation" value="tyro3"/>
</dbReference>
<dbReference type="eggNOG" id="ENOG502QRYR">
    <property type="taxonomic scope" value="Eukaryota"/>
</dbReference>
<dbReference type="InParanoid" id="Q9YI66"/>
<dbReference type="PhylomeDB" id="Q9YI66"/>
<dbReference type="PRO" id="PR:Q9YI66"/>
<dbReference type="Proteomes" id="UP000000437">
    <property type="component" value="Unplaced"/>
</dbReference>
<dbReference type="GO" id="GO:0005886">
    <property type="term" value="C:plasma membrane"/>
    <property type="evidence" value="ECO:0000318"/>
    <property type="project" value="GO_Central"/>
</dbReference>
<dbReference type="GO" id="GO:0043235">
    <property type="term" value="C:receptor complex"/>
    <property type="evidence" value="ECO:0000318"/>
    <property type="project" value="GO_Central"/>
</dbReference>
<dbReference type="GO" id="GO:0005524">
    <property type="term" value="F:ATP binding"/>
    <property type="evidence" value="ECO:0007669"/>
    <property type="project" value="UniProtKB-KW"/>
</dbReference>
<dbReference type="GO" id="GO:0004714">
    <property type="term" value="F:transmembrane receptor protein tyrosine kinase activity"/>
    <property type="evidence" value="ECO:0000318"/>
    <property type="project" value="GO_Central"/>
</dbReference>
<dbReference type="GO" id="GO:0007155">
    <property type="term" value="P:cell adhesion"/>
    <property type="evidence" value="ECO:0007669"/>
    <property type="project" value="UniProtKB-KW"/>
</dbReference>
<dbReference type="GO" id="GO:0016477">
    <property type="term" value="P:cell migration"/>
    <property type="evidence" value="ECO:0000318"/>
    <property type="project" value="GO_Central"/>
</dbReference>
<dbReference type="GO" id="GO:0007169">
    <property type="term" value="P:cell surface receptor protein tyrosine kinase signaling pathway"/>
    <property type="evidence" value="ECO:0000318"/>
    <property type="project" value="GO_Central"/>
</dbReference>
<dbReference type="GO" id="GO:0003094">
    <property type="term" value="P:glomerular filtration"/>
    <property type="evidence" value="ECO:0000315"/>
    <property type="project" value="ZFIN"/>
</dbReference>
<dbReference type="GO" id="GO:0007399">
    <property type="term" value="P:nervous system development"/>
    <property type="evidence" value="ECO:0000318"/>
    <property type="project" value="GO_Central"/>
</dbReference>
<dbReference type="GO" id="GO:0006909">
    <property type="term" value="P:phagocytosis"/>
    <property type="evidence" value="ECO:0000318"/>
    <property type="project" value="GO_Central"/>
</dbReference>
<dbReference type="GO" id="GO:0072015">
    <property type="term" value="P:podocyte development"/>
    <property type="evidence" value="ECO:0000315"/>
    <property type="project" value="ZFIN"/>
</dbReference>
<dbReference type="CDD" id="cd00063">
    <property type="entry name" value="FN3"/>
    <property type="match status" value="1"/>
</dbReference>
<dbReference type="CDD" id="cd05749">
    <property type="entry name" value="IgI_2_Axl_Tyro3_like"/>
    <property type="match status" value="1"/>
</dbReference>
<dbReference type="FunFam" id="2.60.40.10:FF:004613">
    <property type="match status" value="1"/>
</dbReference>
<dbReference type="FunFam" id="1.10.510.10:FF:000089">
    <property type="entry name" value="Tyrosine-protein kinase receptor TYRO3"/>
    <property type="match status" value="1"/>
</dbReference>
<dbReference type="FunFam" id="2.60.40.10:FF:000296">
    <property type="entry name" value="Tyrosine-protein kinase receptor TYRO3"/>
    <property type="match status" value="1"/>
</dbReference>
<dbReference type="FunFam" id="2.60.40.10:FF:000484">
    <property type="entry name" value="Tyrosine-protein kinase receptor TYRO3"/>
    <property type="match status" value="1"/>
</dbReference>
<dbReference type="FunFam" id="2.60.40.10:FF:001653">
    <property type="entry name" value="Tyrosine-protein kinase receptor TYRO3"/>
    <property type="match status" value="1"/>
</dbReference>
<dbReference type="FunFam" id="3.30.200.20:FF:000111">
    <property type="entry name" value="Tyrosine-protein kinase receptor TYRO3"/>
    <property type="match status" value="1"/>
</dbReference>
<dbReference type="Gene3D" id="2.60.40.10">
    <property type="entry name" value="Immunoglobulins"/>
    <property type="match status" value="4"/>
</dbReference>
<dbReference type="Gene3D" id="3.30.200.20">
    <property type="entry name" value="Phosphorylase Kinase, domain 1"/>
    <property type="match status" value="1"/>
</dbReference>
<dbReference type="Gene3D" id="1.10.510.10">
    <property type="entry name" value="Transferase(Phosphotransferase) domain 1"/>
    <property type="match status" value="1"/>
</dbReference>
<dbReference type="InterPro" id="IPR003961">
    <property type="entry name" value="FN3_dom"/>
</dbReference>
<dbReference type="InterPro" id="IPR036116">
    <property type="entry name" value="FN3_sf"/>
</dbReference>
<dbReference type="InterPro" id="IPR007110">
    <property type="entry name" value="Ig-like_dom"/>
</dbReference>
<dbReference type="InterPro" id="IPR036179">
    <property type="entry name" value="Ig-like_dom_sf"/>
</dbReference>
<dbReference type="InterPro" id="IPR013783">
    <property type="entry name" value="Ig-like_fold"/>
</dbReference>
<dbReference type="InterPro" id="IPR013098">
    <property type="entry name" value="Ig_I-set"/>
</dbReference>
<dbReference type="InterPro" id="IPR003599">
    <property type="entry name" value="Ig_sub"/>
</dbReference>
<dbReference type="InterPro" id="IPR003598">
    <property type="entry name" value="Ig_sub2"/>
</dbReference>
<dbReference type="InterPro" id="IPR011009">
    <property type="entry name" value="Kinase-like_dom_sf"/>
</dbReference>
<dbReference type="InterPro" id="IPR000719">
    <property type="entry name" value="Prot_kinase_dom"/>
</dbReference>
<dbReference type="InterPro" id="IPR017441">
    <property type="entry name" value="Protein_kinase_ATP_BS"/>
</dbReference>
<dbReference type="InterPro" id="IPR050122">
    <property type="entry name" value="RTK"/>
</dbReference>
<dbReference type="InterPro" id="IPR001245">
    <property type="entry name" value="Ser-Thr/Tyr_kinase_cat_dom"/>
</dbReference>
<dbReference type="InterPro" id="IPR008266">
    <property type="entry name" value="Tyr_kinase_AS"/>
</dbReference>
<dbReference type="InterPro" id="IPR020635">
    <property type="entry name" value="Tyr_kinase_cat_dom"/>
</dbReference>
<dbReference type="PANTHER" id="PTHR24416">
    <property type="entry name" value="TYROSINE-PROTEIN KINASE RECEPTOR"/>
    <property type="match status" value="1"/>
</dbReference>
<dbReference type="PANTHER" id="PTHR24416:SF279">
    <property type="entry name" value="TYROSINE-PROTEIN KINASE RECEPTOR TYRO3"/>
    <property type="match status" value="1"/>
</dbReference>
<dbReference type="Pfam" id="PF07679">
    <property type="entry name" value="I-set"/>
    <property type="match status" value="1"/>
</dbReference>
<dbReference type="Pfam" id="PF07714">
    <property type="entry name" value="PK_Tyr_Ser-Thr"/>
    <property type="match status" value="1"/>
</dbReference>
<dbReference type="PIRSF" id="PIRSF000615">
    <property type="entry name" value="TyrPK_CSF1-R"/>
    <property type="match status" value="1"/>
</dbReference>
<dbReference type="PRINTS" id="PR00109">
    <property type="entry name" value="TYRKINASE"/>
</dbReference>
<dbReference type="SMART" id="SM00060">
    <property type="entry name" value="FN3"/>
    <property type="match status" value="2"/>
</dbReference>
<dbReference type="SMART" id="SM00409">
    <property type="entry name" value="IG"/>
    <property type="match status" value="2"/>
</dbReference>
<dbReference type="SMART" id="SM00408">
    <property type="entry name" value="IGc2"/>
    <property type="match status" value="2"/>
</dbReference>
<dbReference type="SMART" id="SM00219">
    <property type="entry name" value="TyrKc"/>
    <property type="match status" value="1"/>
</dbReference>
<dbReference type="SUPFAM" id="SSF49265">
    <property type="entry name" value="Fibronectin type III"/>
    <property type="match status" value="1"/>
</dbReference>
<dbReference type="SUPFAM" id="SSF48726">
    <property type="entry name" value="Immunoglobulin"/>
    <property type="match status" value="2"/>
</dbReference>
<dbReference type="SUPFAM" id="SSF56112">
    <property type="entry name" value="Protein kinase-like (PK-like)"/>
    <property type="match status" value="1"/>
</dbReference>
<dbReference type="PROSITE" id="PS50853">
    <property type="entry name" value="FN3"/>
    <property type="match status" value="2"/>
</dbReference>
<dbReference type="PROSITE" id="PS50835">
    <property type="entry name" value="IG_LIKE"/>
    <property type="match status" value="2"/>
</dbReference>
<dbReference type="PROSITE" id="PS00107">
    <property type="entry name" value="PROTEIN_KINASE_ATP"/>
    <property type="match status" value="1"/>
</dbReference>
<dbReference type="PROSITE" id="PS50011">
    <property type="entry name" value="PROTEIN_KINASE_DOM"/>
    <property type="match status" value="1"/>
</dbReference>
<dbReference type="PROSITE" id="PS00109">
    <property type="entry name" value="PROTEIN_KINASE_TYR"/>
    <property type="match status" value="1"/>
</dbReference>
<gene>
    <name type="primary">tyro3</name>
    <name type="synonym">dtk</name>
</gene>
<protein>
    <recommendedName>
        <fullName>Tyrosine-protein kinase receptor TYRO3</fullName>
        <ecNumber>2.7.10.1</ecNumber>
    </recommendedName>
    <alternativeName>
        <fullName>Tyrosine-protein kinase DTK</fullName>
    </alternativeName>
</protein>
<feature type="signal peptide" evidence="2">
    <location>
        <begin position="1"/>
        <end position="20"/>
    </location>
</feature>
<feature type="chain" id="PRO_0000346115" description="Tyrosine-protein kinase receptor TYRO3">
    <location>
        <begin position="21"/>
        <end position="874"/>
    </location>
</feature>
<feature type="topological domain" description="Extracellular" evidence="2">
    <location>
        <begin position="21"/>
        <end position="411"/>
    </location>
</feature>
<feature type="transmembrane region" description="Helical" evidence="2">
    <location>
        <begin position="412"/>
        <end position="432"/>
    </location>
</feature>
<feature type="topological domain" description="Cytoplasmic" evidence="2">
    <location>
        <begin position="433"/>
        <end position="874"/>
    </location>
</feature>
<feature type="domain" description="Ig-like C2-type 1">
    <location>
        <begin position="21"/>
        <end position="106"/>
    </location>
</feature>
<feature type="domain" description="Ig-like C2-type 2">
    <location>
        <begin position="117"/>
        <end position="198"/>
    </location>
</feature>
<feature type="domain" description="Fibronectin type-III 1" evidence="5">
    <location>
        <begin position="202"/>
        <end position="297"/>
    </location>
</feature>
<feature type="domain" description="Fibronectin type-III 2" evidence="5">
    <location>
        <begin position="299"/>
        <end position="403"/>
    </location>
</feature>
<feature type="domain" description="Protein kinase" evidence="4">
    <location>
        <begin position="497"/>
        <end position="768"/>
    </location>
</feature>
<feature type="active site" description="Proton acceptor" evidence="4 6">
    <location>
        <position position="634"/>
    </location>
</feature>
<feature type="binding site" evidence="4">
    <location>
        <begin position="503"/>
        <end position="511"/>
    </location>
    <ligand>
        <name>ATP</name>
        <dbReference type="ChEBI" id="CHEBI:30616"/>
    </ligand>
</feature>
<feature type="binding site" evidence="4">
    <location>
        <position position="529"/>
    </location>
    <ligand>
        <name>ATP</name>
        <dbReference type="ChEBI" id="CHEBI:30616"/>
    </ligand>
</feature>
<feature type="modified residue" description="Phosphotyrosine; by autocatalysis" evidence="1">
    <location>
        <position position="665"/>
    </location>
</feature>
<feature type="glycosylation site" description="N-linked (GlcNAc...) asparagine" evidence="2">
    <location>
        <position position="135"/>
    </location>
</feature>
<feature type="glycosylation site" description="N-linked (GlcNAc...) asparagine" evidence="2">
    <location>
        <position position="174"/>
    </location>
</feature>
<feature type="glycosylation site" description="N-linked (GlcNAc...) asparagine" evidence="2">
    <location>
        <position position="217"/>
    </location>
</feature>
<feature type="glycosylation site" description="N-linked (GlcNAc...) asparagine" evidence="2">
    <location>
        <position position="270"/>
    </location>
</feature>
<feature type="glycosylation site" description="N-linked (GlcNAc...) asparagine" evidence="2">
    <location>
        <position position="305"/>
    </location>
</feature>
<feature type="glycosylation site" description="N-linked (GlcNAc...) asparagine" evidence="2">
    <location>
        <position position="373"/>
    </location>
</feature>
<feature type="disulfide bond" evidence="3">
    <location>
        <begin position="42"/>
        <end position="95"/>
    </location>
</feature>
<feature type="disulfide bond" evidence="3">
    <location>
        <begin position="138"/>
        <end position="181"/>
    </location>
</feature>
<proteinExistence type="evidence at transcript level"/>
<sequence>MEVSLCILLFLLHFNEGIHGVRFTQKPFHQTVTQGNMVRLGCAFEGLSEPEIIWMKDGEKLFSTDQMYITLDPYHWETFHSVKSVQQQDAGKYWCEVEYHGAIISSEPAWITVAGVPHFGVEPEDVAAFAGESFNLTCAASGPPEPVEVLWWLGGEQNGDFTPSPSVLFVKGVNESIKFHCEPRNARGISVSRTGTVHIKARPDSLGRTGHHVSDFNITLTWSPGFTGHSQLSTCTIQLSRGPGEVKLPDVVVEVPPFQHVFEGLRSYSNYSVRVRCDNEVGSSPFSPWVDFHTPQAAPSAAPKNFTFDLSEQQLTLSWATLEQEELRGRLQEELRGRLLAYKLQWNQGGESQDPLLFKENVAHLSGAGRFFNATFQVAACTMAGCGPWSQPVLVMPVSAMQAQTQRGHMWVGLLFGLLVATMVGLLLIVLIRNRGKETQFGSAFAAQGAEVPVSFTAARSFNRQFPELPESTLDSLGINSDLKAKLQDVLIFERLLTLGRMLGKGEFGSVREAFLKSENNSGQKVAVKVLKTDINSSSDIEQCLKEAAYMKDFHHPNVIQLIGVSLHRRAQQRLPIPMVILPFMKHGDLHTFLLMSRLGDEPFTVSQQILIQFMLDIARGMEYLSNKNIIHRDLAARNCMLNENMSVCVADFGLSKKIYSGDYYRQGSVSKLPVKWIALESLADNVYTTQSDVWAFGVTMWEIMTRGQTPYPGVENSEIYEYLIKGERLKQPPDCPADIYEIMHSCWSPVPKCRPSFQHLIDQLELLWAKLNPAPVKEPLLYVNLEEEDGEQANSGTRSSEEPSWGVPWQCAGIEEDEKDWLMVSSGAALAIGGDYRYIIGPSVSAIDEESRHSEDGLSEDIREEEEDVIINV</sequence>
<comment type="function">
    <text evidence="1">May be involved in cell adhesion processes, particularly in the central nervous system.</text>
</comment>
<comment type="catalytic activity">
    <reaction evidence="6">
        <text>L-tyrosyl-[protein] + ATP = O-phospho-L-tyrosyl-[protein] + ADP + H(+)</text>
        <dbReference type="Rhea" id="RHEA:10596"/>
        <dbReference type="Rhea" id="RHEA-COMP:10136"/>
        <dbReference type="Rhea" id="RHEA-COMP:20101"/>
        <dbReference type="ChEBI" id="CHEBI:15378"/>
        <dbReference type="ChEBI" id="CHEBI:30616"/>
        <dbReference type="ChEBI" id="CHEBI:46858"/>
        <dbReference type="ChEBI" id="CHEBI:61978"/>
        <dbReference type="ChEBI" id="CHEBI:456216"/>
        <dbReference type="EC" id="2.7.10.1"/>
    </reaction>
</comment>
<comment type="subcellular location">
    <subcellularLocation>
        <location evidence="1">Cell membrane</location>
        <topology evidence="1">Single-pass type I membrane protein</topology>
    </subcellularLocation>
</comment>
<comment type="developmental stage">
    <text evidence="7">First detected in gastrula. Detected throughout the embryo. Detected in adult.</text>
</comment>
<comment type="similarity">
    <text evidence="4">Belongs to the protein kinase superfamily. Tyr protein kinase family. AXL/UFO subfamily.</text>
</comment>
<organism>
    <name type="scientific">Danio rerio</name>
    <name type="common">Zebrafish</name>
    <name type="synonym">Brachydanio rerio</name>
    <dbReference type="NCBI Taxonomy" id="7955"/>
    <lineage>
        <taxon>Eukaryota</taxon>
        <taxon>Metazoa</taxon>
        <taxon>Chordata</taxon>
        <taxon>Craniata</taxon>
        <taxon>Vertebrata</taxon>
        <taxon>Euteleostomi</taxon>
        <taxon>Actinopterygii</taxon>
        <taxon>Neopterygii</taxon>
        <taxon>Teleostei</taxon>
        <taxon>Ostariophysi</taxon>
        <taxon>Cypriniformes</taxon>
        <taxon>Danionidae</taxon>
        <taxon>Danioninae</taxon>
        <taxon>Danio</taxon>
    </lineage>
</organism>
<reference key="1">
    <citation type="submission" date="1997-08" db="EMBL/GenBank/DDBJ databases">
        <authorList>
            <person name="Walshe J.A."/>
            <person name="Jansa-Perez M."/>
            <person name="Crosier K.E."/>
            <person name="Evans C.W."/>
            <person name="Crosier P.S."/>
        </authorList>
    </citation>
    <scope>NUCLEOTIDE SEQUENCE [MRNA]</scope>
</reference>
<reference key="2">
    <citation type="journal article" date="1996" name="Int. J. Dev. Biol.">
        <title>Expression of the DTK receptor tyrosine kinase during zebrafish development.</title>
        <authorList>
            <person name="Jansa Perez M."/>
            <person name="Walshe J.A."/>
            <person name="Crosier K.E."/>
            <person name="Crosier P.S."/>
        </authorList>
    </citation>
    <scope>DEVELOPMENTAL STAGE</scope>
</reference>
<name>TYRO3_DANRE</name>
<evidence type="ECO:0000250" key="1"/>
<evidence type="ECO:0000255" key="2"/>
<evidence type="ECO:0000255" key="3">
    <source>
        <dbReference type="PROSITE-ProRule" id="PRU00114"/>
    </source>
</evidence>
<evidence type="ECO:0000255" key="4">
    <source>
        <dbReference type="PROSITE-ProRule" id="PRU00159"/>
    </source>
</evidence>
<evidence type="ECO:0000255" key="5">
    <source>
        <dbReference type="PROSITE-ProRule" id="PRU00316"/>
    </source>
</evidence>
<evidence type="ECO:0000255" key="6">
    <source>
        <dbReference type="PROSITE-ProRule" id="PRU10028"/>
    </source>
</evidence>
<evidence type="ECO:0000269" key="7">
    <source>
    </source>
</evidence>